<accession>Q9DAQ9</accession>
<accession>Q810M9</accession>
<organism>
    <name type="scientific">Mus musculus</name>
    <name type="common">Mouse</name>
    <dbReference type="NCBI Taxonomy" id="10090"/>
    <lineage>
        <taxon>Eukaryota</taxon>
        <taxon>Metazoa</taxon>
        <taxon>Chordata</taxon>
        <taxon>Craniata</taxon>
        <taxon>Vertebrata</taxon>
        <taxon>Euteleostomi</taxon>
        <taxon>Mammalia</taxon>
        <taxon>Eutheria</taxon>
        <taxon>Euarchontoglires</taxon>
        <taxon>Glires</taxon>
        <taxon>Rodentia</taxon>
        <taxon>Myomorpha</taxon>
        <taxon>Muroidea</taxon>
        <taxon>Muridae</taxon>
        <taxon>Murinae</taxon>
        <taxon>Mus</taxon>
        <taxon>Mus</taxon>
    </lineage>
</organism>
<comment type="function">
    <text evidence="4">Essential for sperm motility and male fertility (PubMed:26265198). Plays an important role in sperm motility by regulating the organization and function of the mitochondria and is also required for correct sperm midpiece assembly (PubMed:26265198).</text>
</comment>
<comment type="subcellular location">
    <subcellularLocation>
        <location evidence="3">Mitochondrion outer membrane</location>
    </subcellularLocation>
    <subcellularLocation>
        <location evidence="3">Mitochondrion</location>
    </subcellularLocation>
    <subcellularLocation>
        <location evidence="4">Cell projection</location>
        <location evidence="4">Cilium</location>
        <location evidence="4">Flagellum</location>
    </subcellularLocation>
    <text evidence="4">Localizes to the midpiece of the sperm flagellum.</text>
</comment>
<comment type="alternative products">
    <event type="alternative splicing"/>
    <isoform>
        <id>Q9DAQ9-1</id>
        <name>1</name>
        <sequence type="displayed"/>
    </isoform>
    <isoform>
        <id>Q9DAQ9-2</id>
        <name>2</name>
        <sequence type="described" ref="VSP_020764 VSP_020765"/>
    </isoform>
</comment>
<comment type="tissue specificity">
    <text evidence="3 4">Expressed specifically in adult testis (at protein level).</text>
</comment>
<comment type="disruption phenotype">
    <text evidence="4">Male mice are infertile, their sperms exhibit disorganized mitochondrial structure and the sperm-abundance of mitochondrial proteins and activities of mitochondrial respiratory chain complex IV, and ATP levels are significantly reduced (PubMed:26265198). Epididymal sperm possess seriously disrupted midpieces, leading to a severe reduction in sperm motility and infertility (PubMed:26265198).</text>
</comment>
<protein>
    <recommendedName>
        <fullName>Spermatogenesis-associated protein 19, mitochondrial</fullName>
    </recommendedName>
    <alternativeName>
        <fullName>Spermatogenic cell-specific gene 1 protein</fullName>
        <shortName>Spergen-1</shortName>
    </alternativeName>
</protein>
<proteinExistence type="evidence at protein level"/>
<reference key="1">
    <citation type="journal article" date="2004" name="Int. J. Androl.">
        <title>Cloning and characterization of a mouse spergen-1 localized in sperm mitochondria.</title>
        <authorList>
            <person name="Matsuoka Y."/>
            <person name="Iguchi N."/>
            <person name="Kitamura K."/>
            <person name="Nishimura H."/>
            <person name="Manabe H."/>
            <person name="Miyagawa Y."/>
            <person name="Koga M."/>
            <person name="Matsumiya K."/>
            <person name="Okuyama A."/>
            <person name="Tanaka H."/>
            <person name="Nishimune Y."/>
        </authorList>
    </citation>
    <scope>NUCLEOTIDE SEQUENCE [MRNA] (ISOFORM 1)</scope>
    <scope>TISSUE SPECIFICITY</scope>
    <scope>SUBCELLULAR LOCATION</scope>
</reference>
<reference key="2">
    <citation type="journal article" date="2005" name="Science">
        <title>The transcriptional landscape of the mammalian genome.</title>
        <authorList>
            <person name="Carninci P."/>
            <person name="Kasukawa T."/>
            <person name="Katayama S."/>
            <person name="Gough J."/>
            <person name="Frith M.C."/>
            <person name="Maeda N."/>
            <person name="Oyama R."/>
            <person name="Ravasi T."/>
            <person name="Lenhard B."/>
            <person name="Wells C."/>
            <person name="Kodzius R."/>
            <person name="Shimokawa K."/>
            <person name="Bajic V.B."/>
            <person name="Brenner S.E."/>
            <person name="Batalov S."/>
            <person name="Forrest A.R."/>
            <person name="Zavolan M."/>
            <person name="Davis M.J."/>
            <person name="Wilming L.G."/>
            <person name="Aidinis V."/>
            <person name="Allen J.E."/>
            <person name="Ambesi-Impiombato A."/>
            <person name="Apweiler R."/>
            <person name="Aturaliya R.N."/>
            <person name="Bailey T.L."/>
            <person name="Bansal M."/>
            <person name="Baxter L."/>
            <person name="Beisel K.W."/>
            <person name="Bersano T."/>
            <person name="Bono H."/>
            <person name="Chalk A.M."/>
            <person name="Chiu K.P."/>
            <person name="Choudhary V."/>
            <person name="Christoffels A."/>
            <person name="Clutterbuck D.R."/>
            <person name="Crowe M.L."/>
            <person name="Dalla E."/>
            <person name="Dalrymple B.P."/>
            <person name="de Bono B."/>
            <person name="Della Gatta G."/>
            <person name="di Bernardo D."/>
            <person name="Down T."/>
            <person name="Engstrom P."/>
            <person name="Fagiolini M."/>
            <person name="Faulkner G."/>
            <person name="Fletcher C.F."/>
            <person name="Fukushima T."/>
            <person name="Furuno M."/>
            <person name="Futaki S."/>
            <person name="Gariboldi M."/>
            <person name="Georgii-Hemming P."/>
            <person name="Gingeras T.R."/>
            <person name="Gojobori T."/>
            <person name="Green R.E."/>
            <person name="Gustincich S."/>
            <person name="Harbers M."/>
            <person name="Hayashi Y."/>
            <person name="Hensch T.K."/>
            <person name="Hirokawa N."/>
            <person name="Hill D."/>
            <person name="Huminiecki L."/>
            <person name="Iacono M."/>
            <person name="Ikeo K."/>
            <person name="Iwama A."/>
            <person name="Ishikawa T."/>
            <person name="Jakt M."/>
            <person name="Kanapin A."/>
            <person name="Katoh M."/>
            <person name="Kawasawa Y."/>
            <person name="Kelso J."/>
            <person name="Kitamura H."/>
            <person name="Kitano H."/>
            <person name="Kollias G."/>
            <person name="Krishnan S.P."/>
            <person name="Kruger A."/>
            <person name="Kummerfeld S.K."/>
            <person name="Kurochkin I.V."/>
            <person name="Lareau L.F."/>
            <person name="Lazarevic D."/>
            <person name="Lipovich L."/>
            <person name="Liu J."/>
            <person name="Liuni S."/>
            <person name="McWilliam S."/>
            <person name="Madan Babu M."/>
            <person name="Madera M."/>
            <person name="Marchionni L."/>
            <person name="Matsuda H."/>
            <person name="Matsuzawa S."/>
            <person name="Miki H."/>
            <person name="Mignone F."/>
            <person name="Miyake S."/>
            <person name="Morris K."/>
            <person name="Mottagui-Tabar S."/>
            <person name="Mulder N."/>
            <person name="Nakano N."/>
            <person name="Nakauchi H."/>
            <person name="Ng P."/>
            <person name="Nilsson R."/>
            <person name="Nishiguchi S."/>
            <person name="Nishikawa S."/>
            <person name="Nori F."/>
            <person name="Ohara O."/>
            <person name="Okazaki Y."/>
            <person name="Orlando V."/>
            <person name="Pang K.C."/>
            <person name="Pavan W.J."/>
            <person name="Pavesi G."/>
            <person name="Pesole G."/>
            <person name="Petrovsky N."/>
            <person name="Piazza S."/>
            <person name="Reed J."/>
            <person name="Reid J.F."/>
            <person name="Ring B.Z."/>
            <person name="Ringwald M."/>
            <person name="Rost B."/>
            <person name="Ruan Y."/>
            <person name="Salzberg S.L."/>
            <person name="Sandelin A."/>
            <person name="Schneider C."/>
            <person name="Schoenbach C."/>
            <person name="Sekiguchi K."/>
            <person name="Semple C.A."/>
            <person name="Seno S."/>
            <person name="Sessa L."/>
            <person name="Sheng Y."/>
            <person name="Shibata Y."/>
            <person name="Shimada H."/>
            <person name="Shimada K."/>
            <person name="Silva D."/>
            <person name="Sinclair B."/>
            <person name="Sperling S."/>
            <person name="Stupka E."/>
            <person name="Sugiura K."/>
            <person name="Sultana R."/>
            <person name="Takenaka Y."/>
            <person name="Taki K."/>
            <person name="Tammoja K."/>
            <person name="Tan S.L."/>
            <person name="Tang S."/>
            <person name="Taylor M.S."/>
            <person name="Tegner J."/>
            <person name="Teichmann S.A."/>
            <person name="Ueda H.R."/>
            <person name="van Nimwegen E."/>
            <person name="Verardo R."/>
            <person name="Wei C.L."/>
            <person name="Yagi K."/>
            <person name="Yamanishi H."/>
            <person name="Zabarovsky E."/>
            <person name="Zhu S."/>
            <person name="Zimmer A."/>
            <person name="Hide W."/>
            <person name="Bult C."/>
            <person name="Grimmond S.M."/>
            <person name="Teasdale R.D."/>
            <person name="Liu E.T."/>
            <person name="Brusic V."/>
            <person name="Quackenbush J."/>
            <person name="Wahlestedt C."/>
            <person name="Mattick J.S."/>
            <person name="Hume D.A."/>
            <person name="Kai C."/>
            <person name="Sasaki D."/>
            <person name="Tomaru Y."/>
            <person name="Fukuda S."/>
            <person name="Kanamori-Katayama M."/>
            <person name="Suzuki M."/>
            <person name="Aoki J."/>
            <person name="Arakawa T."/>
            <person name="Iida J."/>
            <person name="Imamura K."/>
            <person name="Itoh M."/>
            <person name="Kato T."/>
            <person name="Kawaji H."/>
            <person name="Kawagashira N."/>
            <person name="Kawashima T."/>
            <person name="Kojima M."/>
            <person name="Kondo S."/>
            <person name="Konno H."/>
            <person name="Nakano K."/>
            <person name="Ninomiya N."/>
            <person name="Nishio T."/>
            <person name="Okada M."/>
            <person name="Plessy C."/>
            <person name="Shibata K."/>
            <person name="Shiraki T."/>
            <person name="Suzuki S."/>
            <person name="Tagami M."/>
            <person name="Waki K."/>
            <person name="Watahiki A."/>
            <person name="Okamura-Oho Y."/>
            <person name="Suzuki H."/>
            <person name="Kawai J."/>
            <person name="Hayashizaki Y."/>
        </authorList>
    </citation>
    <scope>NUCLEOTIDE SEQUENCE [LARGE SCALE MRNA] (ISOFORM 1)</scope>
    <source>
        <strain>C57BL/6J</strain>
        <tissue>Testis</tissue>
    </source>
</reference>
<reference key="3">
    <citation type="journal article" date="2004" name="Genome Res.">
        <title>The status, quality, and expansion of the NIH full-length cDNA project: the Mammalian Gene Collection (MGC).</title>
        <authorList>
            <consortium name="The MGC Project Team"/>
        </authorList>
    </citation>
    <scope>NUCLEOTIDE SEQUENCE [LARGE SCALE MRNA] (ISOFORM 2)</scope>
    <source>
        <tissue>Testis</tissue>
    </source>
</reference>
<reference key="4">
    <citation type="journal article" date="2010" name="Cell">
        <title>A tissue-specific atlas of mouse protein phosphorylation and expression.</title>
        <authorList>
            <person name="Huttlin E.L."/>
            <person name="Jedrychowski M.P."/>
            <person name="Elias J.E."/>
            <person name="Goswami T."/>
            <person name="Rad R."/>
            <person name="Beausoleil S.A."/>
            <person name="Villen J."/>
            <person name="Haas W."/>
            <person name="Sowa M.E."/>
            <person name="Gygi S.P."/>
        </authorList>
    </citation>
    <scope>IDENTIFICATION BY MASS SPECTROMETRY [LARGE SCALE ANALYSIS]</scope>
    <source>
        <tissue>Testis</tissue>
    </source>
</reference>
<reference key="5">
    <citation type="journal article" date="2015" name="Mol. Reprod. Dev.">
        <title>Spata19 is critical for sperm mitochondrial function and male fertility.</title>
        <authorList>
            <person name="Mi Y."/>
            <person name="Shi Z."/>
            <person name="Li J."/>
        </authorList>
    </citation>
    <scope>FUNCTION</scope>
    <scope>SUBCELLULAR LOCATION</scope>
    <scope>TISSUE SPECIFICITY</scope>
    <scope>DISRUPTION PHENOTYPE</scope>
</reference>
<evidence type="ECO:0000250" key="1">
    <source>
        <dbReference type="UniProtKB" id="Q920Q3"/>
    </source>
</evidence>
<evidence type="ECO:0000255" key="2"/>
<evidence type="ECO:0000269" key="3">
    <source>
    </source>
</evidence>
<evidence type="ECO:0000269" key="4">
    <source>
    </source>
</evidence>
<evidence type="ECO:0000303" key="5">
    <source>
    </source>
</evidence>
<dbReference type="EMBL" id="AB120716">
    <property type="protein sequence ID" value="BAD01115.1"/>
    <property type="molecule type" value="mRNA"/>
</dbReference>
<dbReference type="EMBL" id="AK005610">
    <property type="protein sequence ID" value="BAB24149.1"/>
    <property type="molecule type" value="mRNA"/>
</dbReference>
<dbReference type="EMBL" id="BC049742">
    <property type="protein sequence ID" value="AAH49742.1"/>
    <property type="molecule type" value="mRNA"/>
</dbReference>
<dbReference type="CCDS" id="CCDS22941.1">
    <molecule id="Q9DAQ9-1"/>
</dbReference>
<dbReference type="CCDS" id="CCDS90524.1">
    <molecule id="Q9DAQ9-2"/>
</dbReference>
<dbReference type="RefSeq" id="NP_001291987.1">
    <molecule id="Q9DAQ9-2"/>
    <property type="nucleotide sequence ID" value="NM_001305058.1"/>
</dbReference>
<dbReference type="RefSeq" id="NP_083575.1">
    <molecule id="Q9DAQ9-1"/>
    <property type="nucleotide sequence ID" value="NM_029299.3"/>
</dbReference>
<dbReference type="SMR" id="Q9DAQ9"/>
<dbReference type="FunCoup" id="Q9DAQ9">
    <property type="interactions" value="8"/>
</dbReference>
<dbReference type="STRING" id="10090.ENSMUSP00000034473"/>
<dbReference type="PhosphoSitePlus" id="Q9DAQ9"/>
<dbReference type="PaxDb" id="10090-ENSMUSP00000034473"/>
<dbReference type="ProteomicsDB" id="257385">
    <molecule id="Q9DAQ9-1"/>
</dbReference>
<dbReference type="ProteomicsDB" id="257386">
    <molecule id="Q9DAQ9-2"/>
</dbReference>
<dbReference type="Antibodypedia" id="46141">
    <property type="antibodies" value="118 antibodies from 24 providers"/>
</dbReference>
<dbReference type="DNASU" id="75469"/>
<dbReference type="Ensembl" id="ENSMUST00000034473.7">
    <molecule id="Q9DAQ9-1"/>
    <property type="protein sequence ID" value="ENSMUSP00000034473.6"/>
    <property type="gene ID" value="ENSMUSG00000031991.11"/>
</dbReference>
<dbReference type="Ensembl" id="ENSMUST00000214287.2">
    <molecule id="Q9DAQ9-2"/>
    <property type="protein sequence ID" value="ENSMUSP00000149525.2"/>
    <property type="gene ID" value="ENSMUSG00000031991.11"/>
</dbReference>
<dbReference type="GeneID" id="75469"/>
<dbReference type="KEGG" id="mmu:75469"/>
<dbReference type="UCSC" id="uc009oqo.2">
    <molecule id="Q9DAQ9-1"/>
    <property type="organism name" value="mouse"/>
</dbReference>
<dbReference type="UCSC" id="uc057aob.1">
    <molecule id="Q9DAQ9-2"/>
    <property type="organism name" value="mouse"/>
</dbReference>
<dbReference type="AGR" id="MGI:1922719"/>
<dbReference type="CTD" id="219938"/>
<dbReference type="MGI" id="MGI:1922719">
    <property type="gene designation" value="Spata19"/>
</dbReference>
<dbReference type="VEuPathDB" id="HostDB:ENSMUSG00000031991"/>
<dbReference type="eggNOG" id="ENOG502SAUZ">
    <property type="taxonomic scope" value="Eukaryota"/>
</dbReference>
<dbReference type="GeneTree" id="ENSGT00390000002749"/>
<dbReference type="HOGENOM" id="CLU_149699_0_0_1"/>
<dbReference type="InParanoid" id="Q9DAQ9"/>
<dbReference type="OMA" id="EHWLKKT"/>
<dbReference type="OrthoDB" id="9012529at2759"/>
<dbReference type="PhylomeDB" id="Q9DAQ9"/>
<dbReference type="TreeFam" id="TF337965"/>
<dbReference type="BioGRID-ORCS" id="75469">
    <property type="hits" value="1 hit in 61 CRISPR screens"/>
</dbReference>
<dbReference type="ChiTaRS" id="Spata19">
    <property type="organism name" value="mouse"/>
</dbReference>
<dbReference type="PRO" id="PR:Q9DAQ9"/>
<dbReference type="Proteomes" id="UP000000589">
    <property type="component" value="Chromosome 9"/>
</dbReference>
<dbReference type="RNAct" id="Q9DAQ9">
    <property type="molecule type" value="protein"/>
</dbReference>
<dbReference type="Bgee" id="ENSMUSG00000031991">
    <property type="expression patterns" value="Expressed in seminiferous tubule of testis and 28 other cell types or tissues"/>
</dbReference>
<dbReference type="ExpressionAtlas" id="Q9DAQ9">
    <property type="expression patterns" value="baseline and differential"/>
</dbReference>
<dbReference type="GO" id="GO:0005741">
    <property type="term" value="C:mitochondrial outer membrane"/>
    <property type="evidence" value="ECO:0000314"/>
    <property type="project" value="UniProtKB"/>
</dbReference>
<dbReference type="GO" id="GO:0036126">
    <property type="term" value="C:sperm flagellum"/>
    <property type="evidence" value="ECO:0000314"/>
    <property type="project" value="UniProtKB"/>
</dbReference>
<dbReference type="GO" id="GO:0097225">
    <property type="term" value="C:sperm midpiece"/>
    <property type="evidence" value="ECO:0000314"/>
    <property type="project" value="UniProtKB"/>
</dbReference>
<dbReference type="GO" id="GO:0030154">
    <property type="term" value="P:cell differentiation"/>
    <property type="evidence" value="ECO:0007669"/>
    <property type="project" value="UniProtKB-KW"/>
</dbReference>
<dbReference type="GO" id="GO:0030382">
    <property type="term" value="P:sperm mitochondrion organization"/>
    <property type="evidence" value="ECO:0000315"/>
    <property type="project" value="UniProtKB"/>
</dbReference>
<dbReference type="GO" id="GO:0007283">
    <property type="term" value="P:spermatogenesis"/>
    <property type="evidence" value="ECO:0007669"/>
    <property type="project" value="UniProtKB-KW"/>
</dbReference>
<dbReference type="InterPro" id="IPR028219">
    <property type="entry name" value="SPATA19"/>
</dbReference>
<dbReference type="PANTHER" id="PTHR36468">
    <property type="entry name" value="SPERMATOGENESIS-ASSOCIATED PROTEIN 19, MITOCHONDRIAL"/>
    <property type="match status" value="1"/>
</dbReference>
<dbReference type="PANTHER" id="PTHR36468:SF1">
    <property type="entry name" value="SPERMATOGENESIS-ASSOCIATED PROTEIN 19, MITOCHONDRIAL"/>
    <property type="match status" value="1"/>
</dbReference>
<dbReference type="Pfam" id="PF15212">
    <property type="entry name" value="SPATA19"/>
    <property type="match status" value="1"/>
</dbReference>
<name>SPT19_MOUSE</name>
<gene>
    <name type="primary">Spata19</name>
    <name type="synonym">Spergen1</name>
</gene>
<feature type="transit peptide" description="Mitochondrion" evidence="2">
    <location>
        <begin position="1"/>
        <end position="24"/>
    </location>
</feature>
<feature type="chain" id="PRO_0000251610" description="Spermatogenesis-associated protein 19, mitochondrial">
    <location>
        <begin position="25"/>
        <end position="154"/>
    </location>
</feature>
<feature type="modified residue" description="Phosphoserine" evidence="1">
    <location>
        <position position="26"/>
    </location>
</feature>
<feature type="modified residue" description="Phosphoserine" evidence="1">
    <location>
        <position position="116"/>
    </location>
</feature>
<feature type="splice variant" id="VSP_020764" description="In isoform 2." evidence="5">
    <location>
        <begin position="1"/>
        <end position="35"/>
    </location>
</feature>
<feature type="splice variant" id="VSP_020765" description="In isoform 2." evidence="5">
    <original>VSVVQHWLNK</original>
    <variation>MSERMWGFGL</variation>
    <location>
        <begin position="36"/>
        <end position="45"/>
    </location>
</feature>
<keyword id="KW-0025">Alternative splicing</keyword>
<keyword id="KW-0966">Cell projection</keyword>
<keyword id="KW-0969">Cilium</keyword>
<keyword id="KW-0217">Developmental protein</keyword>
<keyword id="KW-0221">Differentiation</keyword>
<keyword id="KW-0282">Flagellum</keyword>
<keyword id="KW-0472">Membrane</keyword>
<keyword id="KW-0496">Mitochondrion</keyword>
<keyword id="KW-1000">Mitochondrion outer membrane</keyword>
<keyword id="KW-0597">Phosphoprotein</keyword>
<keyword id="KW-1185">Reference proteome</keyword>
<keyword id="KW-0744">Spermatogenesis</keyword>
<keyword id="KW-0809">Transit peptide</keyword>
<sequence>MIITTWIMYIFARKTVGLPFPPRVNSDIEVEESEAVSVVQHWLNKTEEEASRSIREKMSINDSPTHGHDIHVTRDLVKHHLSKSDMLTDPSQEVLEERTRIQFIRWSHTRIFQVPSEVMDDVMQERIDQVRRSVSHLMCDSYNDPSFRTSCSEC</sequence>